<name>BCHE_RUBGE</name>
<reference key="1">
    <citation type="journal article" date="2004" name="J. Biol. Chem.">
        <title>Aerobic and anaerobic Mg-protoporphyrin monomethyl ester cyclases in purple bacteria: a strategy adopted to bypass the repressive oxygen control system.</title>
        <authorList>
            <person name="Ouchane S."/>
            <person name="Steunou A.-S."/>
            <person name="Picaud M."/>
            <person name="Astier C."/>
        </authorList>
    </citation>
    <scope>NUCLEOTIDE SEQUENCE [GENOMIC DNA]</scope>
    <scope>FUNCTION</scope>
    <scope>CATALYTIC ACTIVITY</scope>
    <scope>COFACTOR</scope>
    <scope>DISRUPTION PHENOTYPE</scope>
    <scope>PATHWAY</scope>
</reference>
<evidence type="ECO:0000250" key="1">
    <source>
        <dbReference type="UniProtKB" id="P26168"/>
    </source>
</evidence>
<evidence type="ECO:0000255" key="2">
    <source>
        <dbReference type="PROSITE-ProRule" id="PRU00666"/>
    </source>
</evidence>
<evidence type="ECO:0000255" key="3">
    <source>
        <dbReference type="PROSITE-ProRule" id="PRU01266"/>
    </source>
</evidence>
<evidence type="ECO:0000269" key="4">
    <source>
    </source>
</evidence>
<evidence type="ECO:0000303" key="5">
    <source>
    </source>
</evidence>
<evidence type="ECO:0000305" key="6"/>
<evidence type="ECO:0000305" key="7">
    <source>
    </source>
</evidence>
<comment type="function">
    <text evidence="4">Involved in the tetrapyrrole biosynthetic pathways leading to chlorophyll and bacteriochlorophyll (BChl). Catalyzes the anaerobic formation of the isocyclic ring (E-ring) in Mg-protoporphyrin monomethyl ester (MPE) to yield protochlorophyllide a (PChlide a) via a six-electron oxidation and the formation of an oxo group at position C13 using oxygen from a water molecule.</text>
</comment>
<comment type="catalytic activity">
    <reaction evidence="7">
        <text>Mg-protoporphyrin IX 13-monomethyl ester + 3 S-adenosyl-L-methionine + H2O = 3,8-divinyl protochlorophyllide a + 3 5'-deoxyadenosine + 3 L-methionine + 4 H(+)</text>
        <dbReference type="Rhea" id="RHEA:49096"/>
        <dbReference type="ChEBI" id="CHEBI:15377"/>
        <dbReference type="ChEBI" id="CHEBI:15378"/>
        <dbReference type="ChEBI" id="CHEBI:17319"/>
        <dbReference type="ChEBI" id="CHEBI:57844"/>
        <dbReference type="ChEBI" id="CHEBI:58632"/>
        <dbReference type="ChEBI" id="CHEBI:59789"/>
        <dbReference type="ChEBI" id="CHEBI:60491"/>
        <dbReference type="EC" id="1.21.98.3"/>
    </reaction>
</comment>
<comment type="cofactor">
    <cofactor evidence="4">
        <name>[4Fe-4S] cluster</name>
        <dbReference type="ChEBI" id="CHEBI:49883"/>
    </cofactor>
    <text evidence="4">Binds 1 [4Fe-4S] cluster.</text>
</comment>
<comment type="cofactor">
    <cofactor evidence="1">
        <name>adenosylcob(III)alamin</name>
        <dbReference type="ChEBI" id="CHEBI:18408"/>
    </cofactor>
    <text evidence="1">Binds 1 adenosylcobalamin.</text>
</comment>
<comment type="pathway">
    <text evidence="7">Porphyrin-containing compound metabolism; bacteriochlorophyll biosynthesis (light-independent).</text>
</comment>
<comment type="disruption phenotype">
    <text evidence="4">Cells do not exhibit a phenotype under high-aeration respiratory growth conditions. In contrast, under low-aerated respiratory growth conditions, the absence of BchE leads to an accumulation of MgPMME.</text>
</comment>
<comment type="similarity">
    <text evidence="6">Belongs to the BchE family.</text>
</comment>
<feature type="chain" id="PRO_0000064873" description="Anaerobic magnesium-protoporphyrin IX monomethyl ester cyclase">
    <location>
        <begin position="1"/>
        <end position="555"/>
    </location>
</feature>
<feature type="domain" description="B12-binding" evidence="2">
    <location>
        <begin position="9"/>
        <end position="143"/>
    </location>
</feature>
<feature type="domain" description="Radical SAM core" evidence="3">
    <location>
        <begin position="191"/>
        <end position="416"/>
    </location>
</feature>
<feature type="binding site" evidence="7">
    <location>
        <position position="205"/>
    </location>
    <ligand>
        <name>[4Fe-4S] cluster</name>
        <dbReference type="ChEBI" id="CHEBI:49883"/>
    </ligand>
</feature>
<feature type="binding site" evidence="7">
    <location>
        <position position="209"/>
    </location>
    <ligand>
        <name>[4Fe-4S] cluster</name>
        <dbReference type="ChEBI" id="CHEBI:49883"/>
    </ligand>
</feature>
<feature type="binding site" evidence="7">
    <location>
        <position position="212"/>
    </location>
    <ligand>
        <name>[4Fe-4S] cluster</name>
        <dbReference type="ChEBI" id="CHEBI:49883"/>
    </ligand>
</feature>
<proteinExistence type="evidence at protein level"/>
<sequence length="555" mass="63536">MRVLFIHPNYHSGGAEIAGNWPPAWVAYLAGYLKAGGYTDVIFVDAMTNDLSEDQVREKITTLKPDIVGCTAITPAIYKAERTLQIAKEVNPDIVTVLGGIHGTFMYPQVLKEAPWIDAIVRGEGEQVMLNLVTAVDQGRFMADRNCVNGIAYAAPDGKVVATPAEPPIEDLDRITPDWGILEWEKYIYIPMNKRVAIPNFARGCPFTCSFCSQWKFWRDYRIRDPKKVVDEIEVLVKQHDVGFFILADEEPTIHRKKFIEFCEELIKRDLGVLWGINTRVTDILRDEKLLPLFRKAGLIHVSLGTEAAAQLKLDMVNKETTIEQNKRAIQLLKDNGIVTEAQFIVGLENETAETLEETYKMARDWNPDMANWAMYTPWPFSDLFQELGDKVEVFDFEKYNFVTPIMKPDAMDRGELLDRVMSNYRRFFMNKAFLQYPFTKDKERRKYLMGCLKAFLKSGFERKFYDLGRVGYWGPQTKKTVNFSFDKNRRIDAQTADELSRVDDGWVTMHGPKIEMRRRKGDDNFEIAKAAMACGGGTEQLTEEQQAATEVRAS</sequence>
<dbReference type="EC" id="1.21.98.3" evidence="7"/>
<dbReference type="EMBL" id="AY309082">
    <property type="protein sequence ID" value="AAP73428.1"/>
    <property type="molecule type" value="Genomic_DNA"/>
</dbReference>
<dbReference type="SMR" id="Q7X2C7"/>
<dbReference type="BRENDA" id="1.21.98.3">
    <property type="organism ID" value="5401"/>
</dbReference>
<dbReference type="UniPathway" id="UPA00671"/>
<dbReference type="GO" id="GO:0005829">
    <property type="term" value="C:cytosol"/>
    <property type="evidence" value="ECO:0007669"/>
    <property type="project" value="TreeGrafter"/>
</dbReference>
<dbReference type="GO" id="GO:0051539">
    <property type="term" value="F:4 iron, 4 sulfur cluster binding"/>
    <property type="evidence" value="ECO:0007669"/>
    <property type="project" value="UniProtKB-KW"/>
</dbReference>
<dbReference type="GO" id="GO:0031419">
    <property type="term" value="F:cobalamin binding"/>
    <property type="evidence" value="ECO:0007669"/>
    <property type="project" value="UniProtKB-KW"/>
</dbReference>
<dbReference type="GO" id="GO:0046872">
    <property type="term" value="F:metal ion binding"/>
    <property type="evidence" value="ECO:0007669"/>
    <property type="project" value="UniProtKB-KW"/>
</dbReference>
<dbReference type="GO" id="GO:0016491">
    <property type="term" value="F:oxidoreductase activity"/>
    <property type="evidence" value="ECO:0007669"/>
    <property type="project" value="UniProtKB-KW"/>
</dbReference>
<dbReference type="GO" id="GO:0036070">
    <property type="term" value="P:light-independent bacteriochlorophyll biosynthetic process"/>
    <property type="evidence" value="ECO:0007669"/>
    <property type="project" value="UniProtKB-UniPathway"/>
</dbReference>
<dbReference type="GO" id="GO:0015979">
    <property type="term" value="P:photosynthesis"/>
    <property type="evidence" value="ECO:0007669"/>
    <property type="project" value="UniProtKB-KW"/>
</dbReference>
<dbReference type="CDD" id="cd01335">
    <property type="entry name" value="Radical_SAM"/>
    <property type="match status" value="1"/>
</dbReference>
<dbReference type="CDD" id="cd02068">
    <property type="entry name" value="radical_SAM_B12_BD"/>
    <property type="match status" value="1"/>
</dbReference>
<dbReference type="Gene3D" id="3.40.50.280">
    <property type="entry name" value="Cobalamin-binding domain"/>
    <property type="match status" value="1"/>
</dbReference>
<dbReference type="Gene3D" id="3.80.30.20">
    <property type="entry name" value="tm_1862 like domain"/>
    <property type="match status" value="1"/>
</dbReference>
<dbReference type="InterPro" id="IPR006158">
    <property type="entry name" value="Cobalamin-bd"/>
</dbReference>
<dbReference type="InterPro" id="IPR006638">
    <property type="entry name" value="Elp3/MiaA/NifB-like_rSAM"/>
</dbReference>
<dbReference type="InterPro" id="IPR034466">
    <property type="entry name" value="Methyltransferase_Class_B"/>
</dbReference>
<dbReference type="InterPro" id="IPR007197">
    <property type="entry name" value="rSAM"/>
</dbReference>
<dbReference type="InterPro" id="IPR023404">
    <property type="entry name" value="rSAM_horseshoe"/>
</dbReference>
<dbReference type="InterPro" id="IPR051198">
    <property type="entry name" value="Tetrapyrrole_Bchl_Biosynth_MTs"/>
</dbReference>
<dbReference type="NCBIfam" id="TIGR02026">
    <property type="entry name" value="BchE"/>
    <property type="match status" value="1"/>
</dbReference>
<dbReference type="PANTHER" id="PTHR43409:SF13">
    <property type="entry name" value="ANAEROBIC MAGNESIUM-PROTOPORPHYRIN IX MONOMETHYL ESTER CYCLASE"/>
    <property type="match status" value="1"/>
</dbReference>
<dbReference type="PANTHER" id="PTHR43409">
    <property type="entry name" value="ANAEROBIC MAGNESIUM-PROTOPORPHYRIN IX MONOMETHYL ESTER CYCLASE-RELATED"/>
    <property type="match status" value="1"/>
</dbReference>
<dbReference type="Pfam" id="PF02310">
    <property type="entry name" value="B12-binding"/>
    <property type="match status" value="1"/>
</dbReference>
<dbReference type="Pfam" id="PF04055">
    <property type="entry name" value="Radical_SAM"/>
    <property type="match status" value="1"/>
</dbReference>
<dbReference type="SFLD" id="SFLDF00302">
    <property type="entry name" value="anaerobic_magnesium-protoporph"/>
    <property type="match status" value="1"/>
</dbReference>
<dbReference type="SFLD" id="SFLDG01082">
    <property type="entry name" value="B12-binding_domain_containing"/>
    <property type="match status" value="1"/>
</dbReference>
<dbReference type="SFLD" id="SFLDG01123">
    <property type="entry name" value="methyltransferase_(Class_B)"/>
    <property type="match status" value="1"/>
</dbReference>
<dbReference type="SMART" id="SM00729">
    <property type="entry name" value="Elp3"/>
    <property type="match status" value="1"/>
</dbReference>
<dbReference type="SUPFAM" id="SSF102114">
    <property type="entry name" value="Radical SAM enzymes"/>
    <property type="match status" value="1"/>
</dbReference>
<dbReference type="PROSITE" id="PS51332">
    <property type="entry name" value="B12_BINDING"/>
    <property type="match status" value="1"/>
</dbReference>
<dbReference type="PROSITE" id="PS51918">
    <property type="entry name" value="RADICAL_SAM"/>
    <property type="match status" value="1"/>
</dbReference>
<gene>
    <name type="primary">bchE</name>
</gene>
<accession>Q7X2C7</accession>
<keyword id="KW-0004">4Fe-4S</keyword>
<keyword id="KW-0077">Bacteriochlorophyll biosynthesis</keyword>
<keyword id="KW-0149">Chlorophyll biosynthesis</keyword>
<keyword id="KW-0846">Cobalamin</keyword>
<keyword id="KW-0170">Cobalt</keyword>
<keyword id="KW-0408">Iron</keyword>
<keyword id="KW-0411">Iron-sulfur</keyword>
<keyword id="KW-0479">Metal-binding</keyword>
<keyword id="KW-0560">Oxidoreductase</keyword>
<keyword id="KW-0602">Photosynthesis</keyword>
<keyword id="KW-0949">S-adenosyl-L-methionine</keyword>
<protein>
    <recommendedName>
        <fullName evidence="5">Anaerobic magnesium-protoporphyrin IX monomethyl ester cyclase</fullName>
        <shortName evidence="5">MPE cyclase</shortName>
        <ecNumber evidence="7">1.21.98.3</ecNumber>
    </recommendedName>
</protein>
<organism>
    <name type="scientific">Rubrivivax gelatinosus</name>
    <name type="common">Rhodocyclus gelatinosus</name>
    <name type="synonym">Rhodopseudomonas gelatinosa</name>
    <dbReference type="NCBI Taxonomy" id="28068"/>
    <lineage>
        <taxon>Bacteria</taxon>
        <taxon>Pseudomonadati</taxon>
        <taxon>Pseudomonadota</taxon>
        <taxon>Betaproteobacteria</taxon>
        <taxon>Burkholderiales</taxon>
        <taxon>Sphaerotilaceae</taxon>
        <taxon>Rubrivivax</taxon>
    </lineage>
</organism>